<protein>
    <recommendedName>
        <fullName evidence="1">Ribosomal protein uS12 methylthiotransferase RimO</fullName>
        <shortName evidence="1">uS12 MTTase</shortName>
        <shortName evidence="1">uS12 methylthiotransferase</shortName>
        <ecNumber evidence="1">2.8.4.4</ecNumber>
    </recommendedName>
    <alternativeName>
        <fullName evidence="1">Ribosomal protein uS12 (aspartate-C(3))-methylthiotransferase</fullName>
    </alternativeName>
    <alternativeName>
        <fullName evidence="1">Ribosome maturation factor RimO</fullName>
    </alternativeName>
</protein>
<proteinExistence type="inferred from homology"/>
<dbReference type="EC" id="2.8.4.4" evidence="1"/>
<dbReference type="EMBL" id="CU207211">
    <property type="protein sequence ID" value="CAL62071.1"/>
    <property type="molecule type" value="Genomic_DNA"/>
</dbReference>
<dbReference type="SMR" id="A4G6D4"/>
<dbReference type="STRING" id="204773.HEAR1921"/>
<dbReference type="KEGG" id="har:HEAR1921"/>
<dbReference type="eggNOG" id="COG0621">
    <property type="taxonomic scope" value="Bacteria"/>
</dbReference>
<dbReference type="HOGENOM" id="CLU_018697_0_0_4"/>
<dbReference type="OrthoDB" id="9805215at2"/>
<dbReference type="Proteomes" id="UP000006697">
    <property type="component" value="Chromosome"/>
</dbReference>
<dbReference type="GO" id="GO:0005829">
    <property type="term" value="C:cytosol"/>
    <property type="evidence" value="ECO:0007669"/>
    <property type="project" value="TreeGrafter"/>
</dbReference>
<dbReference type="GO" id="GO:0051539">
    <property type="term" value="F:4 iron, 4 sulfur cluster binding"/>
    <property type="evidence" value="ECO:0007669"/>
    <property type="project" value="UniProtKB-UniRule"/>
</dbReference>
<dbReference type="GO" id="GO:0035599">
    <property type="term" value="F:aspartic acid methylthiotransferase activity"/>
    <property type="evidence" value="ECO:0007669"/>
    <property type="project" value="TreeGrafter"/>
</dbReference>
<dbReference type="GO" id="GO:0046872">
    <property type="term" value="F:metal ion binding"/>
    <property type="evidence" value="ECO:0007669"/>
    <property type="project" value="UniProtKB-KW"/>
</dbReference>
<dbReference type="GO" id="GO:0103039">
    <property type="term" value="F:protein methylthiotransferase activity"/>
    <property type="evidence" value="ECO:0007669"/>
    <property type="project" value="UniProtKB-EC"/>
</dbReference>
<dbReference type="GO" id="GO:0006400">
    <property type="term" value="P:tRNA modification"/>
    <property type="evidence" value="ECO:0007669"/>
    <property type="project" value="InterPro"/>
</dbReference>
<dbReference type="CDD" id="cd01335">
    <property type="entry name" value="Radical_SAM"/>
    <property type="match status" value="1"/>
</dbReference>
<dbReference type="FunFam" id="3.40.50.12160:FF:000002">
    <property type="entry name" value="Ribosomal protein S12 methylthiotransferase RimO"/>
    <property type="match status" value="1"/>
</dbReference>
<dbReference type="FunFam" id="3.80.30.20:FF:000001">
    <property type="entry name" value="tRNA-2-methylthio-N(6)-dimethylallyladenosine synthase 2"/>
    <property type="match status" value="1"/>
</dbReference>
<dbReference type="Gene3D" id="3.40.50.12160">
    <property type="entry name" value="Methylthiotransferase, N-terminal domain"/>
    <property type="match status" value="1"/>
</dbReference>
<dbReference type="Gene3D" id="2.40.50.140">
    <property type="entry name" value="Nucleic acid-binding proteins"/>
    <property type="match status" value="1"/>
</dbReference>
<dbReference type="Gene3D" id="3.80.30.20">
    <property type="entry name" value="tm_1862 like domain"/>
    <property type="match status" value="1"/>
</dbReference>
<dbReference type="HAMAP" id="MF_01865">
    <property type="entry name" value="MTTase_RimO"/>
    <property type="match status" value="1"/>
</dbReference>
<dbReference type="InterPro" id="IPR006638">
    <property type="entry name" value="Elp3/MiaA/NifB-like_rSAM"/>
</dbReference>
<dbReference type="InterPro" id="IPR005839">
    <property type="entry name" value="Methylthiotransferase"/>
</dbReference>
<dbReference type="InterPro" id="IPR020612">
    <property type="entry name" value="Methylthiotransferase_CS"/>
</dbReference>
<dbReference type="InterPro" id="IPR013848">
    <property type="entry name" value="Methylthiotransferase_N"/>
</dbReference>
<dbReference type="InterPro" id="IPR038135">
    <property type="entry name" value="Methylthiotransferase_N_sf"/>
</dbReference>
<dbReference type="InterPro" id="IPR012340">
    <property type="entry name" value="NA-bd_OB-fold"/>
</dbReference>
<dbReference type="InterPro" id="IPR005840">
    <property type="entry name" value="Ribosomal_uS12_MeSTrfase_RimO"/>
</dbReference>
<dbReference type="InterPro" id="IPR007197">
    <property type="entry name" value="rSAM"/>
</dbReference>
<dbReference type="InterPro" id="IPR023404">
    <property type="entry name" value="rSAM_horseshoe"/>
</dbReference>
<dbReference type="InterPro" id="IPR002792">
    <property type="entry name" value="TRAM_dom"/>
</dbReference>
<dbReference type="NCBIfam" id="TIGR01125">
    <property type="entry name" value="30S ribosomal protein S12 methylthiotransferase RimO"/>
    <property type="match status" value="1"/>
</dbReference>
<dbReference type="NCBIfam" id="TIGR00089">
    <property type="entry name" value="MiaB/RimO family radical SAM methylthiotransferase"/>
    <property type="match status" value="1"/>
</dbReference>
<dbReference type="PANTHER" id="PTHR43837">
    <property type="entry name" value="RIBOSOMAL PROTEIN S12 METHYLTHIOTRANSFERASE RIMO"/>
    <property type="match status" value="1"/>
</dbReference>
<dbReference type="PANTHER" id="PTHR43837:SF1">
    <property type="entry name" value="RIBOSOMAL PROTEIN US12 METHYLTHIOTRANSFERASE RIMO"/>
    <property type="match status" value="1"/>
</dbReference>
<dbReference type="Pfam" id="PF04055">
    <property type="entry name" value="Radical_SAM"/>
    <property type="match status" value="1"/>
</dbReference>
<dbReference type="Pfam" id="PF18693">
    <property type="entry name" value="TRAM_2"/>
    <property type="match status" value="1"/>
</dbReference>
<dbReference type="Pfam" id="PF00919">
    <property type="entry name" value="UPF0004"/>
    <property type="match status" value="1"/>
</dbReference>
<dbReference type="SFLD" id="SFLDG01082">
    <property type="entry name" value="B12-binding_domain_containing"/>
    <property type="match status" value="1"/>
</dbReference>
<dbReference type="SFLD" id="SFLDS00029">
    <property type="entry name" value="Radical_SAM"/>
    <property type="match status" value="1"/>
</dbReference>
<dbReference type="SFLD" id="SFLDF00274">
    <property type="entry name" value="ribosomal_protein_S12_methylth"/>
    <property type="match status" value="1"/>
</dbReference>
<dbReference type="SMART" id="SM00729">
    <property type="entry name" value="Elp3"/>
    <property type="match status" value="1"/>
</dbReference>
<dbReference type="SUPFAM" id="SSF102114">
    <property type="entry name" value="Radical SAM enzymes"/>
    <property type="match status" value="1"/>
</dbReference>
<dbReference type="PROSITE" id="PS51449">
    <property type="entry name" value="MTTASE_N"/>
    <property type="match status" value="1"/>
</dbReference>
<dbReference type="PROSITE" id="PS01278">
    <property type="entry name" value="MTTASE_RADICAL"/>
    <property type="match status" value="1"/>
</dbReference>
<dbReference type="PROSITE" id="PS51918">
    <property type="entry name" value="RADICAL_SAM"/>
    <property type="match status" value="1"/>
</dbReference>
<dbReference type="PROSITE" id="PS50926">
    <property type="entry name" value="TRAM"/>
    <property type="match status" value="1"/>
</dbReference>
<comment type="function">
    <text evidence="1">Catalyzes the methylthiolation of an aspartic acid residue of ribosomal protein uS12.</text>
</comment>
<comment type="catalytic activity">
    <reaction evidence="1">
        <text>L-aspartate(89)-[ribosomal protein uS12]-hydrogen + (sulfur carrier)-SH + AH2 + 2 S-adenosyl-L-methionine = 3-methylsulfanyl-L-aspartate(89)-[ribosomal protein uS12]-hydrogen + (sulfur carrier)-H + 5'-deoxyadenosine + L-methionine + A + S-adenosyl-L-homocysteine + 2 H(+)</text>
        <dbReference type="Rhea" id="RHEA:37087"/>
        <dbReference type="Rhea" id="RHEA-COMP:10460"/>
        <dbReference type="Rhea" id="RHEA-COMP:10461"/>
        <dbReference type="Rhea" id="RHEA-COMP:14737"/>
        <dbReference type="Rhea" id="RHEA-COMP:14739"/>
        <dbReference type="ChEBI" id="CHEBI:13193"/>
        <dbReference type="ChEBI" id="CHEBI:15378"/>
        <dbReference type="ChEBI" id="CHEBI:17319"/>
        <dbReference type="ChEBI" id="CHEBI:17499"/>
        <dbReference type="ChEBI" id="CHEBI:29917"/>
        <dbReference type="ChEBI" id="CHEBI:29961"/>
        <dbReference type="ChEBI" id="CHEBI:57844"/>
        <dbReference type="ChEBI" id="CHEBI:57856"/>
        <dbReference type="ChEBI" id="CHEBI:59789"/>
        <dbReference type="ChEBI" id="CHEBI:64428"/>
        <dbReference type="ChEBI" id="CHEBI:73599"/>
        <dbReference type="EC" id="2.8.4.4"/>
    </reaction>
</comment>
<comment type="cofactor">
    <cofactor evidence="1">
        <name>[4Fe-4S] cluster</name>
        <dbReference type="ChEBI" id="CHEBI:49883"/>
    </cofactor>
    <text evidence="1">Binds 2 [4Fe-4S] clusters. One cluster is coordinated with 3 cysteines and an exchangeable S-adenosyl-L-methionine.</text>
</comment>
<comment type="subcellular location">
    <subcellularLocation>
        <location evidence="1">Cytoplasm</location>
    </subcellularLocation>
</comment>
<comment type="similarity">
    <text evidence="1">Belongs to the methylthiotransferase family. RimO subfamily.</text>
</comment>
<feature type="chain" id="PRO_0000374863" description="Ribosomal protein uS12 methylthiotransferase RimO">
    <location>
        <begin position="1"/>
        <end position="454"/>
    </location>
</feature>
<feature type="domain" description="MTTase N-terminal" evidence="1">
    <location>
        <begin position="9"/>
        <end position="124"/>
    </location>
</feature>
<feature type="domain" description="Radical SAM core" evidence="2">
    <location>
        <begin position="141"/>
        <end position="382"/>
    </location>
</feature>
<feature type="domain" description="TRAM" evidence="1">
    <location>
        <begin position="385"/>
        <end position="454"/>
    </location>
</feature>
<feature type="binding site" evidence="1">
    <location>
        <position position="18"/>
    </location>
    <ligand>
        <name>[4Fe-4S] cluster</name>
        <dbReference type="ChEBI" id="CHEBI:49883"/>
        <label>1</label>
    </ligand>
</feature>
<feature type="binding site" evidence="1">
    <location>
        <position position="54"/>
    </location>
    <ligand>
        <name>[4Fe-4S] cluster</name>
        <dbReference type="ChEBI" id="CHEBI:49883"/>
        <label>1</label>
    </ligand>
</feature>
<feature type="binding site" evidence="1">
    <location>
        <position position="83"/>
    </location>
    <ligand>
        <name>[4Fe-4S] cluster</name>
        <dbReference type="ChEBI" id="CHEBI:49883"/>
        <label>1</label>
    </ligand>
</feature>
<feature type="binding site" evidence="1">
    <location>
        <position position="155"/>
    </location>
    <ligand>
        <name>[4Fe-4S] cluster</name>
        <dbReference type="ChEBI" id="CHEBI:49883"/>
        <label>2</label>
        <note>4Fe-4S-S-AdoMet</note>
    </ligand>
</feature>
<feature type="binding site" evidence="1">
    <location>
        <position position="159"/>
    </location>
    <ligand>
        <name>[4Fe-4S] cluster</name>
        <dbReference type="ChEBI" id="CHEBI:49883"/>
        <label>2</label>
        <note>4Fe-4S-S-AdoMet</note>
    </ligand>
</feature>
<feature type="binding site" evidence="1">
    <location>
        <position position="162"/>
    </location>
    <ligand>
        <name>[4Fe-4S] cluster</name>
        <dbReference type="ChEBI" id="CHEBI:49883"/>
        <label>2</label>
        <note>4Fe-4S-S-AdoMet</note>
    </ligand>
</feature>
<sequence>MTNAPPATPKIGFVSLGCPKALVDSEQILTQLRAEGYDTAKSYDGADLVIVNTCGFIDAAVQESLDAIGEALHENGRVIVTGCLGAKKDANGDDIIQKVHPKVLAVTGPHALGEVMDAVHLHMPKPHAPFLDLLPPQGIKLTPKHFAYLKISEGCNHRCSFCIIPSMRGDLVSRPIADVMMEAENLFKAGVKELLVISQDTSAYGVDIKFRMGFWNGKPVKTHMTQLVEALGELAAPYGAWVRLHYVYPYPHVDAIIPMMAEGKILPYLDVPLQHAHPDVLKRMKRPASGEKNIERIQAWRAMCPDLTIRSTFIAGFPGETEAEFEYLLDFLKEAEIDRLGCFAYSPVEGATANDLPNAVPEEVREERRGRVMLLQEEISKKRLQAKVGKTMRVLIDEVNRTGAATARSGADAPEIDGVVYVKAPYEPHIKYKVGEFVDVKITGADAHDLWAEA</sequence>
<keyword id="KW-0004">4Fe-4S</keyword>
<keyword id="KW-0963">Cytoplasm</keyword>
<keyword id="KW-0408">Iron</keyword>
<keyword id="KW-0411">Iron-sulfur</keyword>
<keyword id="KW-0479">Metal-binding</keyword>
<keyword id="KW-1185">Reference proteome</keyword>
<keyword id="KW-0949">S-adenosyl-L-methionine</keyword>
<keyword id="KW-0808">Transferase</keyword>
<reference key="1">
    <citation type="journal article" date="2007" name="PLoS Genet.">
        <title>A tale of two oxidation states: bacterial colonization of arsenic-rich environments.</title>
        <authorList>
            <person name="Muller D."/>
            <person name="Medigue C."/>
            <person name="Koechler S."/>
            <person name="Barbe V."/>
            <person name="Barakat M."/>
            <person name="Talla E."/>
            <person name="Bonnefoy V."/>
            <person name="Krin E."/>
            <person name="Arsene-Ploetze F."/>
            <person name="Carapito C."/>
            <person name="Chandler M."/>
            <person name="Cournoyer B."/>
            <person name="Cruveiller S."/>
            <person name="Dossat C."/>
            <person name="Duval S."/>
            <person name="Heymann M."/>
            <person name="Leize E."/>
            <person name="Lieutaud A."/>
            <person name="Lievremont D."/>
            <person name="Makita Y."/>
            <person name="Mangenot S."/>
            <person name="Nitschke W."/>
            <person name="Ortet P."/>
            <person name="Perdrial N."/>
            <person name="Schoepp B."/>
            <person name="Siguier P."/>
            <person name="Simeonova D.D."/>
            <person name="Rouy Z."/>
            <person name="Segurens B."/>
            <person name="Turlin E."/>
            <person name="Vallenet D."/>
            <person name="van Dorsselaer A."/>
            <person name="Weiss S."/>
            <person name="Weissenbach J."/>
            <person name="Lett M.-C."/>
            <person name="Danchin A."/>
            <person name="Bertin P.N."/>
        </authorList>
    </citation>
    <scope>NUCLEOTIDE SEQUENCE [LARGE SCALE GENOMIC DNA]</scope>
    <source>
        <strain>ULPAs1</strain>
    </source>
</reference>
<accession>A4G6D4</accession>
<name>RIMO_HERAR</name>
<evidence type="ECO:0000255" key="1">
    <source>
        <dbReference type="HAMAP-Rule" id="MF_01865"/>
    </source>
</evidence>
<evidence type="ECO:0000255" key="2">
    <source>
        <dbReference type="PROSITE-ProRule" id="PRU01266"/>
    </source>
</evidence>
<organism>
    <name type="scientific">Herminiimonas arsenicoxydans</name>
    <dbReference type="NCBI Taxonomy" id="204773"/>
    <lineage>
        <taxon>Bacteria</taxon>
        <taxon>Pseudomonadati</taxon>
        <taxon>Pseudomonadota</taxon>
        <taxon>Betaproteobacteria</taxon>
        <taxon>Burkholderiales</taxon>
        <taxon>Oxalobacteraceae</taxon>
        <taxon>Herminiimonas</taxon>
    </lineage>
</organism>
<gene>
    <name evidence="1" type="primary">rimO</name>
    <name type="ordered locus">HEAR1921</name>
</gene>